<protein>
    <recommendedName>
        <fullName evidence="1">GTP cyclohydrolase-2</fullName>
        <ecNumber evidence="1">3.5.4.25</ecNumber>
    </recommendedName>
    <alternativeName>
        <fullName evidence="1">GTP cyclohydrolase II</fullName>
    </alternativeName>
</protein>
<evidence type="ECO:0000255" key="1">
    <source>
        <dbReference type="HAMAP-Rule" id="MF_00179"/>
    </source>
</evidence>
<dbReference type="EC" id="3.5.4.25" evidence="1"/>
<dbReference type="EMBL" id="CP000503">
    <property type="protein sequence ID" value="ABM25380.1"/>
    <property type="molecule type" value="Genomic_DNA"/>
</dbReference>
<dbReference type="RefSeq" id="WP_011789840.1">
    <property type="nucleotide sequence ID" value="NC_008750.1"/>
</dbReference>
<dbReference type="SMR" id="A1RL35"/>
<dbReference type="GeneID" id="67443062"/>
<dbReference type="KEGG" id="shw:Sputw3181_2556"/>
<dbReference type="HOGENOM" id="CLU_020273_2_1_6"/>
<dbReference type="UniPathway" id="UPA00275">
    <property type="reaction ID" value="UER00400"/>
</dbReference>
<dbReference type="Proteomes" id="UP000002597">
    <property type="component" value="Chromosome"/>
</dbReference>
<dbReference type="GO" id="GO:0005829">
    <property type="term" value="C:cytosol"/>
    <property type="evidence" value="ECO:0007669"/>
    <property type="project" value="TreeGrafter"/>
</dbReference>
<dbReference type="GO" id="GO:0005525">
    <property type="term" value="F:GTP binding"/>
    <property type="evidence" value="ECO:0007669"/>
    <property type="project" value="UniProtKB-KW"/>
</dbReference>
<dbReference type="GO" id="GO:0003935">
    <property type="term" value="F:GTP cyclohydrolase II activity"/>
    <property type="evidence" value="ECO:0007669"/>
    <property type="project" value="UniProtKB-UniRule"/>
</dbReference>
<dbReference type="GO" id="GO:0008270">
    <property type="term" value="F:zinc ion binding"/>
    <property type="evidence" value="ECO:0007669"/>
    <property type="project" value="UniProtKB-UniRule"/>
</dbReference>
<dbReference type="GO" id="GO:0009231">
    <property type="term" value="P:riboflavin biosynthetic process"/>
    <property type="evidence" value="ECO:0007669"/>
    <property type="project" value="UniProtKB-UniRule"/>
</dbReference>
<dbReference type="CDD" id="cd00641">
    <property type="entry name" value="GTP_cyclohydro2"/>
    <property type="match status" value="1"/>
</dbReference>
<dbReference type="FunFam" id="3.40.50.10990:FF:000002">
    <property type="entry name" value="GTP cyclohydrolase-2"/>
    <property type="match status" value="1"/>
</dbReference>
<dbReference type="Gene3D" id="3.40.50.10990">
    <property type="entry name" value="GTP cyclohydrolase II"/>
    <property type="match status" value="1"/>
</dbReference>
<dbReference type="HAMAP" id="MF_00179">
    <property type="entry name" value="RibA"/>
    <property type="match status" value="1"/>
</dbReference>
<dbReference type="InterPro" id="IPR032677">
    <property type="entry name" value="GTP_cyclohydro_II"/>
</dbReference>
<dbReference type="InterPro" id="IPR000926">
    <property type="entry name" value="RibA"/>
</dbReference>
<dbReference type="InterPro" id="IPR036144">
    <property type="entry name" value="RibA-like_sf"/>
</dbReference>
<dbReference type="NCBIfam" id="NF001591">
    <property type="entry name" value="PRK00393.1"/>
    <property type="match status" value="1"/>
</dbReference>
<dbReference type="NCBIfam" id="TIGR00505">
    <property type="entry name" value="ribA"/>
    <property type="match status" value="1"/>
</dbReference>
<dbReference type="PANTHER" id="PTHR21327:SF18">
    <property type="entry name" value="3,4-DIHYDROXY-2-BUTANONE 4-PHOSPHATE SYNTHASE"/>
    <property type="match status" value="1"/>
</dbReference>
<dbReference type="PANTHER" id="PTHR21327">
    <property type="entry name" value="GTP CYCLOHYDROLASE II-RELATED"/>
    <property type="match status" value="1"/>
</dbReference>
<dbReference type="Pfam" id="PF00925">
    <property type="entry name" value="GTP_cyclohydro2"/>
    <property type="match status" value="1"/>
</dbReference>
<dbReference type="SUPFAM" id="SSF142695">
    <property type="entry name" value="RibA-like"/>
    <property type="match status" value="1"/>
</dbReference>
<sequence length="203" mass="22884">MSIKYVATSKLPTPWGVFAMHGFEDTETGKEHVALTFGTLSADEPVLGRIHSECLTGDALFSLRCDCGFQLQTAMQNIAETGCGFILYLRQEGRGIGLLNKIRAYELQDKGANTVEANEQLGFPADMRKYDMIKPMLEQIGVKHVRLMTNNPRKVKAMKEFGIEVVERVPLQVGKNRYNEAYLKTKSTELGHMMSEYHFVDED</sequence>
<accession>A1RL35</accession>
<comment type="function">
    <text evidence="1">Catalyzes the conversion of GTP to 2,5-diamino-6-ribosylamino-4(3H)-pyrimidinone 5'-phosphate (DARP), formate and pyrophosphate.</text>
</comment>
<comment type="catalytic activity">
    <reaction evidence="1">
        <text>GTP + 4 H2O = 2,5-diamino-6-hydroxy-4-(5-phosphoribosylamino)-pyrimidine + formate + 2 phosphate + 3 H(+)</text>
        <dbReference type="Rhea" id="RHEA:23704"/>
        <dbReference type="ChEBI" id="CHEBI:15377"/>
        <dbReference type="ChEBI" id="CHEBI:15378"/>
        <dbReference type="ChEBI" id="CHEBI:15740"/>
        <dbReference type="ChEBI" id="CHEBI:37565"/>
        <dbReference type="ChEBI" id="CHEBI:43474"/>
        <dbReference type="ChEBI" id="CHEBI:58614"/>
        <dbReference type="EC" id="3.5.4.25"/>
    </reaction>
</comment>
<comment type="cofactor">
    <cofactor evidence="1">
        <name>Zn(2+)</name>
        <dbReference type="ChEBI" id="CHEBI:29105"/>
    </cofactor>
    <text evidence="1">Binds 1 zinc ion per subunit.</text>
</comment>
<comment type="pathway">
    <text evidence="1">Cofactor biosynthesis; riboflavin biosynthesis; 5-amino-6-(D-ribitylamino)uracil from GTP: step 1/4.</text>
</comment>
<comment type="similarity">
    <text evidence="1">Belongs to the GTP cyclohydrolase II family.</text>
</comment>
<gene>
    <name evidence="1" type="primary">ribA</name>
    <name type="ordered locus">Sputw3181_2556</name>
</gene>
<organism>
    <name type="scientific">Shewanella sp. (strain W3-18-1)</name>
    <dbReference type="NCBI Taxonomy" id="351745"/>
    <lineage>
        <taxon>Bacteria</taxon>
        <taxon>Pseudomonadati</taxon>
        <taxon>Pseudomonadota</taxon>
        <taxon>Gammaproteobacteria</taxon>
        <taxon>Alteromonadales</taxon>
        <taxon>Shewanellaceae</taxon>
        <taxon>Shewanella</taxon>
    </lineage>
</organism>
<keyword id="KW-0342">GTP-binding</keyword>
<keyword id="KW-0378">Hydrolase</keyword>
<keyword id="KW-0479">Metal-binding</keyword>
<keyword id="KW-0547">Nucleotide-binding</keyword>
<keyword id="KW-0686">Riboflavin biosynthesis</keyword>
<keyword id="KW-0862">Zinc</keyword>
<proteinExistence type="inferred from homology"/>
<name>RIBA_SHESW</name>
<feature type="chain" id="PRO_1000040588" description="GTP cyclohydrolase-2">
    <location>
        <begin position="1"/>
        <end position="203"/>
    </location>
</feature>
<feature type="active site" description="Proton acceptor" evidence="1">
    <location>
        <position position="126"/>
    </location>
</feature>
<feature type="active site" description="Nucleophile" evidence="1">
    <location>
        <position position="128"/>
    </location>
</feature>
<feature type="binding site" evidence="1">
    <location>
        <begin position="49"/>
        <end position="53"/>
    </location>
    <ligand>
        <name>GTP</name>
        <dbReference type="ChEBI" id="CHEBI:37565"/>
    </ligand>
</feature>
<feature type="binding site" evidence="1">
    <location>
        <position position="54"/>
    </location>
    <ligand>
        <name>Zn(2+)</name>
        <dbReference type="ChEBI" id="CHEBI:29105"/>
        <note>catalytic</note>
    </ligand>
</feature>
<feature type="binding site" evidence="1">
    <location>
        <position position="65"/>
    </location>
    <ligand>
        <name>Zn(2+)</name>
        <dbReference type="ChEBI" id="CHEBI:29105"/>
        <note>catalytic</note>
    </ligand>
</feature>
<feature type="binding site" evidence="1">
    <location>
        <position position="67"/>
    </location>
    <ligand>
        <name>Zn(2+)</name>
        <dbReference type="ChEBI" id="CHEBI:29105"/>
        <note>catalytic</note>
    </ligand>
</feature>
<feature type="binding site" evidence="1">
    <location>
        <position position="70"/>
    </location>
    <ligand>
        <name>GTP</name>
        <dbReference type="ChEBI" id="CHEBI:37565"/>
    </ligand>
</feature>
<feature type="binding site" evidence="1">
    <location>
        <begin position="92"/>
        <end position="94"/>
    </location>
    <ligand>
        <name>GTP</name>
        <dbReference type="ChEBI" id="CHEBI:37565"/>
    </ligand>
</feature>
<feature type="binding site" evidence="1">
    <location>
        <position position="114"/>
    </location>
    <ligand>
        <name>GTP</name>
        <dbReference type="ChEBI" id="CHEBI:37565"/>
    </ligand>
</feature>
<feature type="binding site" evidence="1">
    <location>
        <position position="149"/>
    </location>
    <ligand>
        <name>GTP</name>
        <dbReference type="ChEBI" id="CHEBI:37565"/>
    </ligand>
</feature>
<feature type="binding site" evidence="1">
    <location>
        <position position="154"/>
    </location>
    <ligand>
        <name>GTP</name>
        <dbReference type="ChEBI" id="CHEBI:37565"/>
    </ligand>
</feature>
<reference key="1">
    <citation type="submission" date="2006-12" db="EMBL/GenBank/DDBJ databases">
        <title>Complete sequence of Shewanella sp. W3-18-1.</title>
        <authorList>
            <consortium name="US DOE Joint Genome Institute"/>
            <person name="Copeland A."/>
            <person name="Lucas S."/>
            <person name="Lapidus A."/>
            <person name="Barry K."/>
            <person name="Detter J.C."/>
            <person name="Glavina del Rio T."/>
            <person name="Hammon N."/>
            <person name="Israni S."/>
            <person name="Dalin E."/>
            <person name="Tice H."/>
            <person name="Pitluck S."/>
            <person name="Chain P."/>
            <person name="Malfatti S."/>
            <person name="Shin M."/>
            <person name="Vergez L."/>
            <person name="Schmutz J."/>
            <person name="Larimer F."/>
            <person name="Land M."/>
            <person name="Hauser L."/>
            <person name="Kyrpides N."/>
            <person name="Lykidis A."/>
            <person name="Tiedje J."/>
            <person name="Richardson P."/>
        </authorList>
    </citation>
    <scope>NUCLEOTIDE SEQUENCE [LARGE SCALE GENOMIC DNA]</scope>
    <source>
        <strain>W3-18-1</strain>
    </source>
</reference>